<organism>
    <name type="scientific">Staphylococcus haemolyticus (strain JCSC1435)</name>
    <dbReference type="NCBI Taxonomy" id="279808"/>
    <lineage>
        <taxon>Bacteria</taxon>
        <taxon>Bacillati</taxon>
        <taxon>Bacillota</taxon>
        <taxon>Bacilli</taxon>
        <taxon>Bacillales</taxon>
        <taxon>Staphylococcaceae</taxon>
        <taxon>Staphylococcus</taxon>
    </lineage>
</organism>
<reference key="1">
    <citation type="journal article" date="2005" name="J. Bacteriol.">
        <title>Whole-genome sequencing of Staphylococcus haemolyticus uncovers the extreme plasticity of its genome and the evolution of human-colonizing staphylococcal species.</title>
        <authorList>
            <person name="Takeuchi F."/>
            <person name="Watanabe S."/>
            <person name="Baba T."/>
            <person name="Yuzawa H."/>
            <person name="Ito T."/>
            <person name="Morimoto Y."/>
            <person name="Kuroda M."/>
            <person name="Cui L."/>
            <person name="Takahashi M."/>
            <person name="Ankai A."/>
            <person name="Baba S."/>
            <person name="Fukui S."/>
            <person name="Lee J.C."/>
            <person name="Hiramatsu K."/>
        </authorList>
    </citation>
    <scope>NUCLEOTIDE SEQUENCE [LARGE SCALE GENOMIC DNA]</scope>
    <source>
        <strain>JCSC1435</strain>
    </source>
</reference>
<name>BETA_STAHJ</name>
<dbReference type="EC" id="1.1.99.1" evidence="1"/>
<dbReference type="EC" id="1.2.1.8" evidence="1"/>
<dbReference type="EMBL" id="AP006716">
    <property type="protein sequence ID" value="BAE03738.1"/>
    <property type="molecule type" value="Genomic_DNA"/>
</dbReference>
<dbReference type="RefSeq" id="WP_011274755.1">
    <property type="nucleotide sequence ID" value="NC_007168.1"/>
</dbReference>
<dbReference type="SMR" id="Q4L9D7"/>
<dbReference type="CAZy" id="AA3">
    <property type="family name" value="Auxiliary Activities 3"/>
</dbReference>
<dbReference type="KEGG" id="sha:SH0429"/>
<dbReference type="eggNOG" id="COG2303">
    <property type="taxonomic scope" value="Bacteria"/>
</dbReference>
<dbReference type="HOGENOM" id="CLU_002865_7_1_9"/>
<dbReference type="OrthoDB" id="9785276at2"/>
<dbReference type="UniPathway" id="UPA00529">
    <property type="reaction ID" value="UER00385"/>
</dbReference>
<dbReference type="Proteomes" id="UP000000543">
    <property type="component" value="Chromosome"/>
</dbReference>
<dbReference type="GO" id="GO:0016020">
    <property type="term" value="C:membrane"/>
    <property type="evidence" value="ECO:0007669"/>
    <property type="project" value="TreeGrafter"/>
</dbReference>
<dbReference type="GO" id="GO:0008802">
    <property type="term" value="F:betaine-aldehyde dehydrogenase (NAD+) activity"/>
    <property type="evidence" value="ECO:0007669"/>
    <property type="project" value="UniProtKB-EC"/>
</dbReference>
<dbReference type="GO" id="GO:0008812">
    <property type="term" value="F:choline dehydrogenase activity"/>
    <property type="evidence" value="ECO:0007669"/>
    <property type="project" value="UniProtKB-UniRule"/>
</dbReference>
<dbReference type="GO" id="GO:0050660">
    <property type="term" value="F:flavin adenine dinucleotide binding"/>
    <property type="evidence" value="ECO:0007669"/>
    <property type="project" value="InterPro"/>
</dbReference>
<dbReference type="GO" id="GO:0019285">
    <property type="term" value="P:glycine betaine biosynthetic process from choline"/>
    <property type="evidence" value="ECO:0007669"/>
    <property type="project" value="UniProtKB-UniRule"/>
</dbReference>
<dbReference type="Gene3D" id="3.30.410.40">
    <property type="match status" value="1"/>
</dbReference>
<dbReference type="Gene3D" id="3.50.50.60">
    <property type="entry name" value="FAD/NAD(P)-binding domain"/>
    <property type="match status" value="1"/>
</dbReference>
<dbReference type="HAMAP" id="MF_00750">
    <property type="entry name" value="Choline_dehydrogen"/>
    <property type="match status" value="1"/>
</dbReference>
<dbReference type="InterPro" id="IPR011533">
    <property type="entry name" value="BetA"/>
</dbReference>
<dbReference type="InterPro" id="IPR036188">
    <property type="entry name" value="FAD/NAD-bd_sf"/>
</dbReference>
<dbReference type="InterPro" id="IPR012132">
    <property type="entry name" value="GMC_OxRdtase"/>
</dbReference>
<dbReference type="InterPro" id="IPR000172">
    <property type="entry name" value="GMC_OxRdtase_N"/>
</dbReference>
<dbReference type="InterPro" id="IPR007867">
    <property type="entry name" value="GMC_OxRtase_C"/>
</dbReference>
<dbReference type="NCBIfam" id="TIGR01810">
    <property type="entry name" value="betA"/>
    <property type="match status" value="1"/>
</dbReference>
<dbReference type="NCBIfam" id="NF002550">
    <property type="entry name" value="PRK02106.1"/>
    <property type="match status" value="1"/>
</dbReference>
<dbReference type="PANTHER" id="PTHR11552:SF147">
    <property type="entry name" value="CHOLINE DEHYDROGENASE, MITOCHONDRIAL"/>
    <property type="match status" value="1"/>
</dbReference>
<dbReference type="PANTHER" id="PTHR11552">
    <property type="entry name" value="GLUCOSE-METHANOL-CHOLINE GMC OXIDOREDUCTASE"/>
    <property type="match status" value="1"/>
</dbReference>
<dbReference type="Pfam" id="PF05199">
    <property type="entry name" value="GMC_oxred_C"/>
    <property type="match status" value="1"/>
</dbReference>
<dbReference type="Pfam" id="PF00732">
    <property type="entry name" value="GMC_oxred_N"/>
    <property type="match status" value="1"/>
</dbReference>
<dbReference type="PIRSF" id="PIRSF000137">
    <property type="entry name" value="Alcohol_oxidase"/>
    <property type="match status" value="1"/>
</dbReference>
<dbReference type="SUPFAM" id="SSF54373">
    <property type="entry name" value="FAD-linked reductases, C-terminal domain"/>
    <property type="match status" value="1"/>
</dbReference>
<dbReference type="SUPFAM" id="SSF51905">
    <property type="entry name" value="FAD/NAD(P)-binding domain"/>
    <property type="match status" value="1"/>
</dbReference>
<dbReference type="PROSITE" id="PS00623">
    <property type="entry name" value="GMC_OXRED_1"/>
    <property type="match status" value="1"/>
</dbReference>
<dbReference type="PROSITE" id="PS00624">
    <property type="entry name" value="GMC_OXRED_2"/>
    <property type="match status" value="1"/>
</dbReference>
<comment type="function">
    <text evidence="1">Involved in the biosynthesis of the osmoprotectant glycine betaine. Catalyzes the oxidation of choline to betaine aldehyde and betaine aldehyde to glycine betaine at the same rate.</text>
</comment>
<comment type="catalytic activity">
    <reaction evidence="1">
        <text>choline + A = betaine aldehyde + AH2</text>
        <dbReference type="Rhea" id="RHEA:17433"/>
        <dbReference type="ChEBI" id="CHEBI:13193"/>
        <dbReference type="ChEBI" id="CHEBI:15354"/>
        <dbReference type="ChEBI" id="CHEBI:15710"/>
        <dbReference type="ChEBI" id="CHEBI:17499"/>
        <dbReference type="EC" id="1.1.99.1"/>
    </reaction>
</comment>
<comment type="catalytic activity">
    <reaction evidence="1">
        <text>betaine aldehyde + NAD(+) + H2O = glycine betaine + NADH + 2 H(+)</text>
        <dbReference type="Rhea" id="RHEA:15305"/>
        <dbReference type="ChEBI" id="CHEBI:15377"/>
        <dbReference type="ChEBI" id="CHEBI:15378"/>
        <dbReference type="ChEBI" id="CHEBI:15710"/>
        <dbReference type="ChEBI" id="CHEBI:17750"/>
        <dbReference type="ChEBI" id="CHEBI:57540"/>
        <dbReference type="ChEBI" id="CHEBI:57945"/>
        <dbReference type="EC" id="1.2.1.8"/>
    </reaction>
</comment>
<comment type="cofactor">
    <cofactor evidence="1">
        <name>FAD</name>
        <dbReference type="ChEBI" id="CHEBI:57692"/>
    </cofactor>
</comment>
<comment type="pathway">
    <text evidence="1">Amine and polyamine biosynthesis; betaine biosynthesis via choline pathway; betaine aldehyde from choline (cytochrome c reductase route): step 1/1.</text>
</comment>
<comment type="similarity">
    <text evidence="1">Belongs to the GMC oxidoreductase family.</text>
</comment>
<proteinExistence type="inferred from homology"/>
<evidence type="ECO:0000255" key="1">
    <source>
        <dbReference type="HAMAP-Rule" id="MF_00750"/>
    </source>
</evidence>
<feature type="chain" id="PRO_0000205603" description="Oxygen-dependent choline dehydrogenase">
    <location>
        <begin position="1"/>
        <end position="568"/>
    </location>
</feature>
<feature type="active site" description="Proton acceptor" evidence="1">
    <location>
        <position position="473"/>
    </location>
</feature>
<feature type="binding site" evidence="1">
    <location>
        <begin position="8"/>
        <end position="37"/>
    </location>
    <ligand>
        <name>FAD</name>
        <dbReference type="ChEBI" id="CHEBI:57692"/>
    </ligand>
</feature>
<gene>
    <name evidence="1" type="primary">betA</name>
    <name type="ordered locus">SH0429</name>
</gene>
<protein>
    <recommendedName>
        <fullName evidence="1">Oxygen-dependent choline dehydrogenase</fullName>
        <shortName evidence="1">CDH</shortName>
        <shortName evidence="1">CHD</shortName>
        <ecNumber evidence="1">1.1.99.1</ecNumber>
    </recommendedName>
    <alternativeName>
        <fullName evidence="1">Betaine aldehyde dehydrogenase</fullName>
        <shortName evidence="1">BADH</shortName>
        <ecNumber evidence="1">1.2.1.8</ecNumber>
    </alternativeName>
</protein>
<sequence>MSKKNSYDYVIIGGGSAGSVLGNRLTEDKDKEVLVLEAGRSDYPWDLFIQMPAALMFPSGNRFYDWIYQTEEEPHMGRKVDHARGKVLGGSSSINGMIYQRGNPMDYEGWAEPEGMESWDFAHCLPYFKRLEKTYGATPFDQFRGHHGPIKLKRGPATNPLFKSFFDAGVEAGYHKTKDVNGYRQEGFGPFDSQVHNGRRVSASRAYLHPAMKRKNLTVKTRAFVTKIHFDGNKATGVTFKRNGRYHTVDAGEVILSGGAFNTPQLLQLSGIGDAEFLKSKGIEPRMHLPGVGENFEDHLEVYIQHECKEPVSLQPSLDVKRMPWIGLQWIFARKGAAASNHFEGGAFVRSNNQVAYPNLMFHFLPIAVRYDGQKAPVAHGYQVHVGPMYSNSRGSLKIKSKDPFEKPSIVFNYLSTKEDEQEWVEAIRVARNILAQKAMDPYNGGEISPGPSVQTDEEILDWVRRDGETALHPSCSAKMGPASDPMSVVDPLTMKVHGMENLRVVDASAMPRTTNGNIHAPVLMLAEKAADIIRGKKPLEPQYVDYYKHGVSDENAGAMEFDPYYQH</sequence>
<keyword id="KW-0274">FAD</keyword>
<keyword id="KW-0285">Flavoprotein</keyword>
<keyword id="KW-0520">NAD</keyword>
<keyword id="KW-0560">Oxidoreductase</keyword>
<accession>Q4L9D7</accession>